<comment type="function">
    <text evidence="1">Not toxic to mice by intracerebroventricular injection.</text>
</comment>
<comment type="subcellular location">
    <subcellularLocation>
        <location evidence="1">Secreted</location>
    </subcellularLocation>
</comment>
<comment type="tissue specificity">
    <text evidence="1">Expressed by the venom gland.</text>
</comment>
<comment type="mass spectrometry"/>
<comment type="similarity">
    <text evidence="3">Belongs to the neurotoxin 04 (omega-agtx) family. 03 (type II/III omega-agtx) subfamily.</text>
</comment>
<dbReference type="SMR" id="P85146"/>
<dbReference type="ArachnoServer" id="AS000040">
    <property type="toxin name" value="U14-ctenitoxin-Co1c"/>
</dbReference>
<dbReference type="GO" id="GO:0005576">
    <property type="term" value="C:extracellular region"/>
    <property type="evidence" value="ECO:0007669"/>
    <property type="project" value="UniProtKB-SubCell"/>
</dbReference>
<dbReference type="GO" id="GO:0090729">
    <property type="term" value="F:toxin activity"/>
    <property type="evidence" value="ECO:0007669"/>
    <property type="project" value="InterPro"/>
</dbReference>
<dbReference type="InterPro" id="IPR013605">
    <property type="entry name" value="Toxin_34"/>
</dbReference>
<dbReference type="Pfam" id="PF08396">
    <property type="entry name" value="Toxin_34"/>
    <property type="match status" value="1"/>
</dbReference>
<evidence type="ECO:0000269" key="1">
    <source ref="1"/>
</evidence>
<evidence type="ECO:0000303" key="2">
    <source ref="1"/>
</evidence>
<evidence type="ECO:0000305" key="3"/>
<proteinExistence type="evidence at protein level"/>
<reference evidence="3" key="1">
    <citation type="submission" date="2007-04" db="UniProtKB">
        <title>Protein Oct F18-6 from venom of spider Oligoctenus ornatus has strong sequence similarities with Tx3-4 type neurotoxins from Phoneutria spiders.</title>
        <authorList>
            <person name="Borges M.H."/>
            <person name="Oliveira C.F.B."/>
            <person name="Goncalves J.M."/>
            <person name="Rates B."/>
            <person name="Santos D.M."/>
            <person name="Pimenta A.M.C."/>
            <person name="Cordeiro M.N."/>
            <person name="Richardson M."/>
        </authorList>
    </citation>
    <scope>PROTEIN SEQUENCE</scope>
    <scope>SUBCELLULAR LOCATION</scope>
    <scope>TISSUE SPECIFICITY</scope>
    <scope>MASS SPECTROMETRY</scope>
    <source>
        <tissue evidence="1">Venom</tissue>
    </source>
</reference>
<organism>
    <name type="scientific">Ctenus ornatus</name>
    <name type="common">Brazilian spider</name>
    <name type="synonym">Oligoctenus ornatus</name>
    <dbReference type="NCBI Taxonomy" id="406443"/>
    <lineage>
        <taxon>Eukaryota</taxon>
        <taxon>Metazoa</taxon>
        <taxon>Ecdysozoa</taxon>
        <taxon>Arthropoda</taxon>
        <taxon>Chelicerata</taxon>
        <taxon>Arachnida</taxon>
        <taxon>Araneae</taxon>
        <taxon>Araneomorphae</taxon>
        <taxon>Entelegynae</taxon>
        <taxon>Lycosoidea</taxon>
        <taxon>Ctenidae</taxon>
        <taxon>Oligoctenus</taxon>
    </lineage>
</organism>
<protein>
    <recommendedName>
        <fullName>U14-ctenitoxin-Co1c</fullName>
        <shortName>U14-CNTX-Co1c</shortName>
    </recommendedName>
    <alternativeName>
        <fullName>Venom protein Oct F18-6</fullName>
    </alternativeName>
</protein>
<accession>P85146</accession>
<keyword id="KW-0903">Direct protein sequencing</keyword>
<keyword id="KW-0964">Secreted</keyword>
<feature type="chain" id="PRO_0000287677" description="U14-ctenitoxin-Co1c">
    <location>
        <begin position="1"/>
        <end position="31" status="greater than"/>
    </location>
</feature>
<feature type="non-terminal residue" evidence="2">
    <location>
        <position position="31"/>
    </location>
</feature>
<sequence>GSCLELGEYCNGSKDDCQCCRDNAYCGCDIF</sequence>
<name>F186_CTEON</name>